<keyword id="KW-0963">Cytoplasm</keyword>
<keyword id="KW-0227">DNA damage</keyword>
<keyword id="KW-0234">DNA repair</keyword>
<keyword id="KW-0378">Hydrolase</keyword>
<keyword id="KW-1185">Reference proteome</keyword>
<comment type="function">
    <text evidence="1">Excises uracil residues from the DNA which can arise as a result of misincorporation of dUMP residues by DNA polymerase or due to deamination of cytosine.</text>
</comment>
<comment type="catalytic activity">
    <reaction evidence="1">
        <text>Hydrolyzes single-stranded DNA or mismatched double-stranded DNA and polynucleotides, releasing free uracil.</text>
        <dbReference type="EC" id="3.2.2.27"/>
    </reaction>
</comment>
<comment type="subcellular location">
    <subcellularLocation>
        <location evidence="1">Cytoplasm</location>
    </subcellularLocation>
</comment>
<comment type="similarity">
    <text evidence="1">Belongs to the uracil-DNA glycosylase (UDG) superfamily. UNG family.</text>
</comment>
<feature type="chain" id="PRO_1000203373" description="Uracil-DNA glycosylase">
    <location>
        <begin position="1"/>
        <end position="248"/>
    </location>
</feature>
<feature type="active site" description="Proton acceptor" evidence="1">
    <location>
        <position position="85"/>
    </location>
</feature>
<name>UNG_DEIDV</name>
<sequence>MSDQPDLFGTPTGAKAPHAIMPAGLPASWKEALAEEFAAPYFHALKDFLVEERRTHTVYPPAADVFNALRYTPLENVKVMILGQDPYHGPGQAHGLSFSVRPGVRIPPSLKNIYKELQSDIPGFTPPRHGYLKAWAEQGVLLLNAVLTVRAGEANSHAGKGWESFTDAVIRAVNNRPQRVVFVLWGAYARKKARLITAPHHVIIESAHPSPLSVTRFMGTRPFSRVNAALEEAGEAPIDWQLPAQVEE</sequence>
<organism>
    <name type="scientific">Deinococcus deserti (strain DSM 17065 / CIP 109153 / LMG 22923 / VCD115)</name>
    <dbReference type="NCBI Taxonomy" id="546414"/>
    <lineage>
        <taxon>Bacteria</taxon>
        <taxon>Thermotogati</taxon>
        <taxon>Deinococcota</taxon>
        <taxon>Deinococci</taxon>
        <taxon>Deinococcales</taxon>
        <taxon>Deinococcaceae</taxon>
        <taxon>Deinococcus</taxon>
    </lineage>
</organism>
<gene>
    <name evidence="1" type="primary">ung</name>
    <name type="ordered locus">Deide_00830</name>
</gene>
<proteinExistence type="inferred from homology"/>
<accession>C1CXS7</accession>
<reference key="1">
    <citation type="journal article" date="2009" name="PLoS Genet.">
        <title>Alliance of proteomics and genomics to unravel the specificities of Sahara bacterium Deinococcus deserti.</title>
        <authorList>
            <person name="de Groot A."/>
            <person name="Dulermo R."/>
            <person name="Ortet P."/>
            <person name="Blanchard L."/>
            <person name="Guerin P."/>
            <person name="Fernandez B."/>
            <person name="Vacherie B."/>
            <person name="Dossat C."/>
            <person name="Jolivet E."/>
            <person name="Siguier P."/>
            <person name="Chandler M."/>
            <person name="Barakat M."/>
            <person name="Dedieu A."/>
            <person name="Barbe V."/>
            <person name="Heulin T."/>
            <person name="Sommer S."/>
            <person name="Achouak W."/>
            <person name="Armengaud J."/>
        </authorList>
    </citation>
    <scope>NUCLEOTIDE SEQUENCE [LARGE SCALE GENOMIC DNA]</scope>
    <source>
        <strain>DSM 17065 / CIP 109153 / LMG 22923 / VCD115</strain>
    </source>
</reference>
<evidence type="ECO:0000255" key="1">
    <source>
        <dbReference type="HAMAP-Rule" id="MF_00148"/>
    </source>
</evidence>
<dbReference type="EC" id="3.2.2.27" evidence="1"/>
<dbReference type="EMBL" id="CP001114">
    <property type="protein sequence ID" value="ACO44883.1"/>
    <property type="molecule type" value="Genomic_DNA"/>
</dbReference>
<dbReference type="RefSeq" id="WP_012692006.1">
    <property type="nucleotide sequence ID" value="NC_012526.1"/>
</dbReference>
<dbReference type="SMR" id="C1CXS7"/>
<dbReference type="STRING" id="546414.Deide_00830"/>
<dbReference type="PaxDb" id="546414-Deide_00830"/>
<dbReference type="KEGG" id="ddr:Deide_00830"/>
<dbReference type="eggNOG" id="COG0692">
    <property type="taxonomic scope" value="Bacteria"/>
</dbReference>
<dbReference type="HOGENOM" id="CLU_032162_3_1_0"/>
<dbReference type="OrthoDB" id="9804372at2"/>
<dbReference type="Proteomes" id="UP000002208">
    <property type="component" value="Chromosome"/>
</dbReference>
<dbReference type="GO" id="GO:0005737">
    <property type="term" value="C:cytoplasm"/>
    <property type="evidence" value="ECO:0007669"/>
    <property type="project" value="UniProtKB-SubCell"/>
</dbReference>
<dbReference type="GO" id="GO:0004844">
    <property type="term" value="F:uracil DNA N-glycosylase activity"/>
    <property type="evidence" value="ECO:0007669"/>
    <property type="project" value="UniProtKB-UniRule"/>
</dbReference>
<dbReference type="GO" id="GO:0097510">
    <property type="term" value="P:base-excision repair, AP site formation via deaminated base removal"/>
    <property type="evidence" value="ECO:0007669"/>
    <property type="project" value="TreeGrafter"/>
</dbReference>
<dbReference type="CDD" id="cd10027">
    <property type="entry name" value="UDG-F1-like"/>
    <property type="match status" value="1"/>
</dbReference>
<dbReference type="FunFam" id="3.40.470.10:FF:000001">
    <property type="entry name" value="Uracil-DNA glycosylase"/>
    <property type="match status" value="1"/>
</dbReference>
<dbReference type="Gene3D" id="3.40.470.10">
    <property type="entry name" value="Uracil-DNA glycosylase-like domain"/>
    <property type="match status" value="1"/>
</dbReference>
<dbReference type="HAMAP" id="MF_00148">
    <property type="entry name" value="UDG"/>
    <property type="match status" value="1"/>
</dbReference>
<dbReference type="InterPro" id="IPR002043">
    <property type="entry name" value="UDG_fam1"/>
</dbReference>
<dbReference type="InterPro" id="IPR005122">
    <property type="entry name" value="Uracil-DNA_glycosylase-like"/>
</dbReference>
<dbReference type="InterPro" id="IPR036895">
    <property type="entry name" value="Uracil-DNA_glycosylase-like_sf"/>
</dbReference>
<dbReference type="NCBIfam" id="NF003588">
    <property type="entry name" value="PRK05254.1-1"/>
    <property type="match status" value="1"/>
</dbReference>
<dbReference type="NCBIfam" id="NF003589">
    <property type="entry name" value="PRK05254.1-2"/>
    <property type="match status" value="1"/>
</dbReference>
<dbReference type="NCBIfam" id="NF003591">
    <property type="entry name" value="PRK05254.1-4"/>
    <property type="match status" value="1"/>
</dbReference>
<dbReference type="NCBIfam" id="NF003592">
    <property type="entry name" value="PRK05254.1-5"/>
    <property type="match status" value="1"/>
</dbReference>
<dbReference type="NCBIfam" id="TIGR00628">
    <property type="entry name" value="ung"/>
    <property type="match status" value="1"/>
</dbReference>
<dbReference type="PANTHER" id="PTHR11264">
    <property type="entry name" value="URACIL-DNA GLYCOSYLASE"/>
    <property type="match status" value="1"/>
</dbReference>
<dbReference type="PANTHER" id="PTHR11264:SF0">
    <property type="entry name" value="URACIL-DNA GLYCOSYLASE"/>
    <property type="match status" value="1"/>
</dbReference>
<dbReference type="Pfam" id="PF03167">
    <property type="entry name" value="UDG"/>
    <property type="match status" value="1"/>
</dbReference>
<dbReference type="SMART" id="SM00986">
    <property type="entry name" value="UDG"/>
    <property type="match status" value="1"/>
</dbReference>
<dbReference type="SMART" id="SM00987">
    <property type="entry name" value="UreE_C"/>
    <property type="match status" value="1"/>
</dbReference>
<dbReference type="SUPFAM" id="SSF52141">
    <property type="entry name" value="Uracil-DNA glycosylase-like"/>
    <property type="match status" value="1"/>
</dbReference>
<protein>
    <recommendedName>
        <fullName evidence="1">Uracil-DNA glycosylase</fullName>
        <shortName evidence="1">UDG</shortName>
        <ecNumber evidence="1">3.2.2.27</ecNumber>
    </recommendedName>
</protein>